<dbReference type="EMBL" id="D11079">
    <property type="protein sequence ID" value="BAA01825.1"/>
    <property type="molecule type" value="Genomic_DNA"/>
</dbReference>
<dbReference type="EMBL" id="AY243312">
    <property type="protein sequence ID" value="AAO89456.1"/>
    <property type="molecule type" value="Genomic_DNA"/>
</dbReference>
<dbReference type="PIR" id="JQ1789">
    <property type="entry name" value="JQ1789"/>
</dbReference>
<dbReference type="RefSeq" id="YP_233059.1">
    <property type="nucleotide sequence ID" value="NC_006998.1"/>
</dbReference>
<dbReference type="DIP" id="DIP-2178N"/>
<dbReference type="IntAct" id="Q01219">
    <property type="interactions" value="1"/>
</dbReference>
<dbReference type="MINT" id="Q01219"/>
<dbReference type="DNASU" id="3707706"/>
<dbReference type="GeneID" id="3707706"/>
<dbReference type="KEGG" id="vg:3707706"/>
<dbReference type="Proteomes" id="UP000000344">
    <property type="component" value="Genome"/>
</dbReference>
<dbReference type="InterPro" id="IPR007032">
    <property type="entry name" value="Poxvirus_A51"/>
</dbReference>
<dbReference type="Pfam" id="PF04948">
    <property type="entry name" value="Pox_A51"/>
    <property type="match status" value="1"/>
</dbReference>
<feature type="chain" id="PRO_0000099347" description="Protein OPG181">
    <location>
        <begin position="1"/>
        <end position="334"/>
    </location>
</feature>
<keyword id="KW-0244">Early protein</keyword>
<keyword id="KW-1185">Reference proteome</keyword>
<name>PG181_VACCW</name>
<proteinExistence type="evidence at transcript level"/>
<comment type="induction">
    <text>Expressed in the early phase of the viral replicative cycle.</text>
</comment>
<comment type="similarity">
    <text evidence="1">Belongs to the orthopoxvirus OPG181 family.</text>
</comment>
<evidence type="ECO:0000305" key="1"/>
<organismHost>
    <name type="scientific">Bos taurus</name>
    <name type="common">Bovine</name>
    <dbReference type="NCBI Taxonomy" id="9913"/>
</organismHost>
<accession>Q01219</accession>
<accession>Q76ZM7</accession>
<protein>
    <recommendedName>
        <fullName>Protein OPG181</fullName>
    </recommendedName>
</protein>
<sequence length="334" mass="37732">MDGVIVYCLNALVKHGEEINHIKNDFMIKPCCERVCEKVKNVHIGGQSKNNTVIADLPYMDNAVSDVCNSLYKKNVSRISRFANLIKIDDDDKTPTGVYNYFKPKDVIPVIISIGKDKDVCELLISSDISCACVELNSYHVAILPMDVSFFTKGNASLIILLFDFSIDAAPLLRSVTDNNVIISRHQRLHDELPSSNWFKFYISIKSDYCSILYMVVDGSVMHAIADNRTHAIISKNILDNTTINDECRCCYFEPQIRILDRDEMLNGSSCDMNRHCIMMNLPDVGKFGSSMLGKYEPDMIKIALSVAGNLIRNRDYIPGRRGYSYYVYGIASR</sequence>
<reference key="1">
    <citation type="journal article" date="1991" name="J. Gen. Virol.">
        <title>Nucleotide sequence of 42 kbp of vaccinia virus strain WR from near the right inverted terminal repeat.</title>
        <authorList>
            <person name="Smith G.L."/>
            <person name="Chan Y.S."/>
            <person name="Howard S.T."/>
        </authorList>
    </citation>
    <scope>NUCLEOTIDE SEQUENCE [GENOMIC DNA]</scope>
</reference>
<reference key="2">
    <citation type="submission" date="2003-02" db="EMBL/GenBank/DDBJ databases">
        <title>Sequencing of the coding region of Vaccinia-WR to an average 9-fold redundancy and an error rate of 0.16/10kb.</title>
        <authorList>
            <person name="Esposito J.J."/>
            <person name="Frace A.M."/>
            <person name="Sammons S.A."/>
            <person name="Olsen-Rasmussen M."/>
            <person name="Osborne J."/>
            <person name="Wohlhueter R."/>
        </authorList>
    </citation>
    <scope>NUCLEOTIDE SEQUENCE [LARGE SCALE GENOMIC DNA]</scope>
</reference>
<reference key="3">
    <citation type="journal article" date="2014" name="Elife">
        <title>A single vertebrate DNA virus protein disarms invertebrate immunity to RNA virus infection.</title>
        <authorList>
            <person name="Gammon D.B."/>
            <person name="Duraffour S."/>
            <person name="Rozelle D.K."/>
            <person name="Hehnly H."/>
            <person name="Sharma R."/>
            <person name="Sparks M.E."/>
            <person name="West C.C."/>
            <person name="Chen Y."/>
            <person name="Moresco J.J."/>
            <person name="Andrei G."/>
            <person name="Connor J.H."/>
            <person name="Conte D. Jr."/>
            <person name="Gundersen-Rindal D.E."/>
            <person name="Marshall W.L."/>
            <person name="Yates J.R."/>
            <person name="Silverman N."/>
            <person name="Mello C.C."/>
        </authorList>
    </citation>
    <scope>FUNCTION</scope>
    <scope>SUBCELLULAR LOCATION</scope>
</reference>
<organism>
    <name type="scientific">Vaccinia virus (strain Western Reserve)</name>
    <name type="common">VACV</name>
    <name type="synonym">Vaccinia virus (strain WR)</name>
    <dbReference type="NCBI Taxonomy" id="10254"/>
    <lineage>
        <taxon>Viruses</taxon>
        <taxon>Varidnaviria</taxon>
        <taxon>Bamfordvirae</taxon>
        <taxon>Nucleocytoviricota</taxon>
        <taxon>Pokkesviricetes</taxon>
        <taxon>Chitovirales</taxon>
        <taxon>Poxviridae</taxon>
        <taxon>Chordopoxvirinae</taxon>
        <taxon>Orthopoxvirus</taxon>
        <taxon>Vaccinia virus</taxon>
    </lineage>
</organism>
<gene>
    <name type="primary">OPG181</name>
    <name type="ordered locus">VACWR177</name>
    <name type="ORF">A51R</name>
</gene>